<protein>
    <recommendedName>
        <fullName>Chaperone protein Skp</fullName>
    </recommendedName>
</protein>
<name>SKP_SALTI</name>
<reference key="1">
    <citation type="journal article" date="2001" name="Nature">
        <title>Complete genome sequence of a multiple drug resistant Salmonella enterica serovar Typhi CT18.</title>
        <authorList>
            <person name="Parkhill J."/>
            <person name="Dougan G."/>
            <person name="James K.D."/>
            <person name="Thomson N.R."/>
            <person name="Pickard D."/>
            <person name="Wain J."/>
            <person name="Churcher C.M."/>
            <person name="Mungall K.L."/>
            <person name="Bentley S.D."/>
            <person name="Holden M.T.G."/>
            <person name="Sebaihia M."/>
            <person name="Baker S."/>
            <person name="Basham D."/>
            <person name="Brooks K."/>
            <person name="Chillingworth T."/>
            <person name="Connerton P."/>
            <person name="Cronin A."/>
            <person name="Davis P."/>
            <person name="Davies R.M."/>
            <person name="Dowd L."/>
            <person name="White N."/>
            <person name="Farrar J."/>
            <person name="Feltwell T."/>
            <person name="Hamlin N."/>
            <person name="Haque A."/>
            <person name="Hien T.T."/>
            <person name="Holroyd S."/>
            <person name="Jagels K."/>
            <person name="Krogh A."/>
            <person name="Larsen T.S."/>
            <person name="Leather S."/>
            <person name="Moule S."/>
            <person name="O'Gaora P."/>
            <person name="Parry C."/>
            <person name="Quail M.A."/>
            <person name="Rutherford K.M."/>
            <person name="Simmonds M."/>
            <person name="Skelton J."/>
            <person name="Stevens K."/>
            <person name="Whitehead S."/>
            <person name="Barrell B.G."/>
        </authorList>
    </citation>
    <scope>NUCLEOTIDE SEQUENCE [LARGE SCALE GENOMIC DNA]</scope>
    <source>
        <strain>CT18</strain>
    </source>
</reference>
<reference key="2">
    <citation type="journal article" date="2003" name="J. Bacteriol.">
        <title>Comparative genomics of Salmonella enterica serovar Typhi strains Ty2 and CT18.</title>
        <authorList>
            <person name="Deng W."/>
            <person name="Liou S.-R."/>
            <person name="Plunkett G. III"/>
            <person name="Mayhew G.F."/>
            <person name="Rose D.J."/>
            <person name="Burland V."/>
            <person name="Kodoyianni V."/>
            <person name="Schwartz D.C."/>
            <person name="Blattner F.R."/>
        </authorList>
    </citation>
    <scope>NUCLEOTIDE SEQUENCE [LARGE SCALE GENOMIC DNA]</scope>
    <source>
        <strain>ATCC 700931 / Ty2</strain>
    </source>
</reference>
<evidence type="ECO:0000250" key="1"/>
<evidence type="ECO:0000255" key="2"/>
<evidence type="ECO:0000305" key="3"/>
<dbReference type="EMBL" id="AL513382">
    <property type="protein sequence ID" value="CAD08683.1"/>
    <property type="molecule type" value="Genomic_DNA"/>
</dbReference>
<dbReference type="EMBL" id="AE014613">
    <property type="protein sequence ID" value="AAO67956.1"/>
    <property type="molecule type" value="Genomic_DNA"/>
</dbReference>
<dbReference type="RefSeq" id="NP_454832.1">
    <property type="nucleotide sequence ID" value="NC_003198.1"/>
</dbReference>
<dbReference type="RefSeq" id="WP_000758966.1">
    <property type="nucleotide sequence ID" value="NZ_WSUR01000009.1"/>
</dbReference>
<dbReference type="SMR" id="P0A1Z3"/>
<dbReference type="STRING" id="220341.gene:17584281"/>
<dbReference type="KEGG" id="stt:t0226"/>
<dbReference type="KEGG" id="sty:STY0248"/>
<dbReference type="PATRIC" id="fig|220341.7.peg.248"/>
<dbReference type="eggNOG" id="COG2825">
    <property type="taxonomic scope" value="Bacteria"/>
</dbReference>
<dbReference type="HOGENOM" id="CLU_101388_2_0_6"/>
<dbReference type="OMA" id="MENDLQS"/>
<dbReference type="OrthoDB" id="7061584at2"/>
<dbReference type="Proteomes" id="UP000000541">
    <property type="component" value="Chromosome"/>
</dbReference>
<dbReference type="Proteomes" id="UP000002670">
    <property type="component" value="Chromosome"/>
</dbReference>
<dbReference type="GO" id="GO:0005829">
    <property type="term" value="C:cytosol"/>
    <property type="evidence" value="ECO:0007669"/>
    <property type="project" value="TreeGrafter"/>
</dbReference>
<dbReference type="GO" id="GO:0042597">
    <property type="term" value="C:periplasmic space"/>
    <property type="evidence" value="ECO:0007669"/>
    <property type="project" value="UniProtKB-SubCell"/>
</dbReference>
<dbReference type="GO" id="GO:0051082">
    <property type="term" value="F:unfolded protein binding"/>
    <property type="evidence" value="ECO:0007669"/>
    <property type="project" value="InterPro"/>
</dbReference>
<dbReference type="GO" id="GO:0061077">
    <property type="term" value="P:chaperone-mediated protein folding"/>
    <property type="evidence" value="ECO:0007669"/>
    <property type="project" value="TreeGrafter"/>
</dbReference>
<dbReference type="GO" id="GO:0050821">
    <property type="term" value="P:protein stabilization"/>
    <property type="evidence" value="ECO:0007669"/>
    <property type="project" value="TreeGrafter"/>
</dbReference>
<dbReference type="FunFam" id="3.30.910.20:FF:000001">
    <property type="entry name" value="Molecular chaperone Skp"/>
    <property type="match status" value="1"/>
</dbReference>
<dbReference type="Gene3D" id="3.30.910.20">
    <property type="entry name" value="Skp domain"/>
    <property type="match status" value="1"/>
</dbReference>
<dbReference type="InterPro" id="IPR005632">
    <property type="entry name" value="Chaperone_Skp"/>
</dbReference>
<dbReference type="InterPro" id="IPR024930">
    <property type="entry name" value="Skp_dom_sf"/>
</dbReference>
<dbReference type="NCBIfam" id="NF008047">
    <property type="entry name" value="PRK10780.1"/>
    <property type="match status" value="1"/>
</dbReference>
<dbReference type="PANTHER" id="PTHR35089">
    <property type="entry name" value="CHAPERONE PROTEIN SKP"/>
    <property type="match status" value="1"/>
</dbReference>
<dbReference type="PANTHER" id="PTHR35089:SF1">
    <property type="entry name" value="CHAPERONE PROTEIN SKP"/>
    <property type="match status" value="1"/>
</dbReference>
<dbReference type="Pfam" id="PF03938">
    <property type="entry name" value="OmpH"/>
    <property type="match status" value="1"/>
</dbReference>
<dbReference type="PIRSF" id="PIRSF002094">
    <property type="entry name" value="OMP26_Skp"/>
    <property type="match status" value="1"/>
</dbReference>
<dbReference type="SMART" id="SM00935">
    <property type="entry name" value="OmpH"/>
    <property type="match status" value="1"/>
</dbReference>
<dbReference type="SUPFAM" id="SSF111384">
    <property type="entry name" value="OmpH-like"/>
    <property type="match status" value="1"/>
</dbReference>
<organism>
    <name type="scientific">Salmonella typhi</name>
    <dbReference type="NCBI Taxonomy" id="90370"/>
    <lineage>
        <taxon>Bacteria</taxon>
        <taxon>Pseudomonadati</taxon>
        <taxon>Pseudomonadota</taxon>
        <taxon>Gammaproteobacteria</taxon>
        <taxon>Enterobacterales</taxon>
        <taxon>Enterobacteriaceae</taxon>
        <taxon>Salmonella</taxon>
    </lineage>
</organism>
<feature type="signal peptide" evidence="1">
    <location>
        <begin position="1"/>
        <end position="20"/>
    </location>
</feature>
<feature type="chain" id="PRO_0000020177" description="Chaperone protein Skp">
    <location>
        <begin position="21"/>
        <end position="161"/>
    </location>
</feature>
<feature type="region of interest" description="Lipopolysaccharide binding" evidence="2">
    <location>
        <begin position="97"/>
        <end position="108"/>
    </location>
</feature>
<gene>
    <name type="primary">skp</name>
    <name type="synonym">ompH</name>
    <name type="ordered locus">STY0248</name>
    <name type="ordered locus">t0226</name>
</gene>
<accession>P0A1Z3</accession>
<accession>P16974</accession>
<keyword id="KW-0143">Chaperone</keyword>
<keyword id="KW-0574">Periplasm</keyword>
<keyword id="KW-0732">Signal</keyword>
<comment type="function">
    <text evidence="1">Molecular chaperone that interacts specifically with outer membrane proteins, thus maintaining the solubility of early folding intermediates during passage through the periplasm.</text>
</comment>
<comment type="subunit">
    <text evidence="1">Homotrimer.</text>
</comment>
<comment type="subcellular location">
    <subcellularLocation>
        <location evidence="1">Periplasm</location>
    </subcellularLocation>
</comment>
<comment type="similarity">
    <text evidence="3">Belongs to the Skp family.</text>
</comment>
<sequence>MKKWLLAAGLGLAMVTSAQAADKIAIVNMGNLFQQVAQKTGVSNTLENEFKGRAAELQKMETDLQSKMQRLQSMKAGSDRTKLEKDVMSQRQTFAQKAQAFEKDRARRSNEERNKLVTRIQTAVKKVANDQSIDLVVDANTVAYNSSDVKDITADVLKQVK</sequence>
<proteinExistence type="inferred from homology"/>